<dbReference type="EC" id="1.-.-.-" evidence="8"/>
<dbReference type="EMBL" id="LC079035">
    <property type="protein sequence ID" value="BAV32152.1"/>
    <property type="molecule type" value="Genomic_DNA"/>
</dbReference>
<dbReference type="SMR" id="A0A1B4XBH8"/>
<dbReference type="GlyCosmos" id="A0A1B4XBH8">
    <property type="glycosylation" value="1 site, No reported glycans"/>
</dbReference>
<dbReference type="GO" id="GO:0016020">
    <property type="term" value="C:membrane"/>
    <property type="evidence" value="ECO:0007669"/>
    <property type="project" value="UniProtKB-SubCell"/>
</dbReference>
<dbReference type="GO" id="GO:0020037">
    <property type="term" value="F:heme binding"/>
    <property type="evidence" value="ECO:0007669"/>
    <property type="project" value="InterPro"/>
</dbReference>
<dbReference type="GO" id="GO:0005506">
    <property type="term" value="F:iron ion binding"/>
    <property type="evidence" value="ECO:0007669"/>
    <property type="project" value="InterPro"/>
</dbReference>
<dbReference type="GO" id="GO:0004497">
    <property type="term" value="F:monooxygenase activity"/>
    <property type="evidence" value="ECO:0007669"/>
    <property type="project" value="UniProtKB-KW"/>
</dbReference>
<dbReference type="GO" id="GO:0016705">
    <property type="term" value="F:oxidoreductase activity, acting on paired donors, with incorporation or reduction of molecular oxygen"/>
    <property type="evidence" value="ECO:0007669"/>
    <property type="project" value="InterPro"/>
</dbReference>
<dbReference type="GO" id="GO:0017000">
    <property type="term" value="P:antibiotic biosynthetic process"/>
    <property type="evidence" value="ECO:0007669"/>
    <property type="project" value="UniProtKB-KW"/>
</dbReference>
<dbReference type="CDD" id="cd11062">
    <property type="entry name" value="CYP58-like"/>
    <property type="match status" value="1"/>
</dbReference>
<dbReference type="Gene3D" id="1.10.630.10">
    <property type="entry name" value="Cytochrome P450"/>
    <property type="match status" value="1"/>
</dbReference>
<dbReference type="InterPro" id="IPR001128">
    <property type="entry name" value="Cyt_P450"/>
</dbReference>
<dbReference type="InterPro" id="IPR002403">
    <property type="entry name" value="Cyt_P450_E_grp-IV"/>
</dbReference>
<dbReference type="InterPro" id="IPR036396">
    <property type="entry name" value="Cyt_P450_sf"/>
</dbReference>
<dbReference type="InterPro" id="IPR050121">
    <property type="entry name" value="Cytochrome_P450_monoxygenase"/>
</dbReference>
<dbReference type="PANTHER" id="PTHR24305">
    <property type="entry name" value="CYTOCHROME P450"/>
    <property type="match status" value="1"/>
</dbReference>
<dbReference type="PANTHER" id="PTHR24305:SF166">
    <property type="entry name" value="CYTOCHROME P450 12A4, MITOCHONDRIAL-RELATED"/>
    <property type="match status" value="1"/>
</dbReference>
<dbReference type="Pfam" id="PF00067">
    <property type="entry name" value="p450"/>
    <property type="match status" value="1"/>
</dbReference>
<dbReference type="PRINTS" id="PR00465">
    <property type="entry name" value="EP450IV"/>
</dbReference>
<dbReference type="PRINTS" id="PR00385">
    <property type="entry name" value="P450"/>
</dbReference>
<dbReference type="SUPFAM" id="SSF48264">
    <property type="entry name" value="Cytochrome P450"/>
    <property type="match status" value="1"/>
</dbReference>
<name>SDNH_SORAA</name>
<feature type="chain" id="PRO_0000441052" description="Cytochrome P450 monooxygenase sdnH">
    <location>
        <begin position="1"/>
        <end position="542"/>
    </location>
</feature>
<feature type="transmembrane region" description="Helical" evidence="2">
    <location>
        <begin position="25"/>
        <end position="45"/>
    </location>
</feature>
<feature type="transmembrane region" description="Helical" evidence="2">
    <location>
        <begin position="340"/>
        <end position="360"/>
    </location>
</feature>
<feature type="region of interest" description="Disordered" evidence="4">
    <location>
        <begin position="141"/>
        <end position="160"/>
    </location>
</feature>
<feature type="binding site" description="axial binding residue" evidence="1">
    <location>
        <position position="483"/>
    </location>
    <ligand>
        <name>heme</name>
        <dbReference type="ChEBI" id="CHEBI:30413"/>
    </ligand>
    <ligandPart>
        <name>Fe</name>
        <dbReference type="ChEBI" id="CHEBI:18248"/>
    </ligandPart>
</feature>
<feature type="glycosylation site" description="N-linked (GlcNAc...) asparagine" evidence="3">
    <location>
        <position position="506"/>
    </location>
</feature>
<keyword id="KW-0045">Antibiotic biosynthesis</keyword>
<keyword id="KW-0325">Glycoprotein</keyword>
<keyword id="KW-0349">Heme</keyword>
<keyword id="KW-0408">Iron</keyword>
<keyword id="KW-0472">Membrane</keyword>
<keyword id="KW-0479">Metal-binding</keyword>
<keyword id="KW-0503">Monooxygenase</keyword>
<keyword id="KW-0560">Oxidoreductase</keyword>
<keyword id="KW-0812">Transmembrane</keyword>
<keyword id="KW-1133">Transmembrane helix</keyword>
<sequence>MALASIFAEFKGLAAGVSLDNINPLYVAGGILGAFTVYSIILVVYRLRFHPLTGFPGPKLLAATTWYEAYVDLIHHDFPERLAKIHEKYGRDFLTIKLIVVPRSPRFSGPIVRVSPHEIHVNDAEFFHTVFATEAKHRTNIIPPRGLGQEDSIGSTRSHDMHQLRRKPLDKFMGQRNIVRQQSMIHEEIRVLDQAMTSLKGNGKPVRLDCVFTSFTGDIVGRLACGEAPQLLQGKDFTPEWYDMIRGAARIIPVLRHFPQVGEITQKMPNWLVQALVPRSAGFRVLQMLGAERIARVRAEVADEKKGVEGGESMFHYLLRSDLPESEKISARLNAEATSFMGAGTYPTAATLIFVAYYILADPKIEARLKNDLKDVMANFDDEVPNWEKVEQVEYLQACIKEGLRLLRLFRRKARIATDIDLTYGGYVIPKGTPVSLSPYTMHMDPDVFPEPTKFKPERWLVEDLDPRMNRNLNPFLAGSRNCIGMHVAWAQMYLILATLFRPNKNYSLKLGECDESDVYPVVDNEFGVAKYDSRGLNALVV</sequence>
<reference key="1">
    <citation type="journal article" date="2016" name="J. Antibiot.">
        <title>Genome mining of the sordarin biosynthetic gene cluster from Sordaria araneosa Cain ATCC 36386: characterization of cycloaraneosene synthase and GDP-6-deoxyaltrose transferase.</title>
        <authorList>
            <person name="Kudo F."/>
            <person name="Matsuura Y."/>
            <person name="Hayashi T."/>
            <person name="Fukushima M."/>
            <person name="Eguchi T."/>
        </authorList>
    </citation>
    <scope>NUCLEOTIDE SEQUENCE [GENOMIC DNA]</scope>
    <scope>FUNCTION</scope>
    <scope>PATHWAY</scope>
    <source>
        <strain>ATCC 36386 / NRRL 3196</strain>
    </source>
</reference>
<gene>
    <name evidence="6" type="primary">sdnH</name>
</gene>
<organism>
    <name type="scientific">Sordaria araneosa</name>
    <name type="common">Pleurage araneosa</name>
    <dbReference type="NCBI Taxonomy" id="573841"/>
    <lineage>
        <taxon>Eukaryota</taxon>
        <taxon>Fungi</taxon>
        <taxon>Dikarya</taxon>
        <taxon>Ascomycota</taxon>
        <taxon>Pezizomycotina</taxon>
        <taxon>Sordariomycetes</taxon>
        <taxon>Sordariomycetidae</taxon>
        <taxon>Sordariales</taxon>
        <taxon>Sordariaceae</taxon>
        <taxon>Sordaria</taxon>
    </lineage>
</organism>
<evidence type="ECO:0000250" key="1">
    <source>
        <dbReference type="UniProtKB" id="P04798"/>
    </source>
</evidence>
<evidence type="ECO:0000255" key="2"/>
<evidence type="ECO:0000255" key="3">
    <source>
        <dbReference type="PROSITE-ProRule" id="PRU00498"/>
    </source>
</evidence>
<evidence type="ECO:0000256" key="4">
    <source>
        <dbReference type="SAM" id="MobiDB-lite"/>
    </source>
</evidence>
<evidence type="ECO:0000269" key="5">
    <source>
    </source>
</evidence>
<evidence type="ECO:0000303" key="6">
    <source>
    </source>
</evidence>
<evidence type="ECO:0000305" key="7"/>
<evidence type="ECO:0000305" key="8">
    <source>
    </source>
</evidence>
<comment type="function">
    <text evidence="5">Cytochrome P450 monooxygenase; part of the gene cluster that mediates the biosynthesis of sordarin and hypoxysordarin, glycoside antibiotics with a unique tetracyclic diterpene aglycone structure (PubMed:27072286). First, the geranylgeranyl diphosphate synthase sdnC constructs GGDP from farnesyl diphosphate and isopentenyl diphosphate (PubMed:27072286). The diterpene cyclase sdnA then catalyzes the cyclization of GGDP to afford cycloaraneosene (PubMed:27072286). Cycloaraneosene is then hydroxylated four times by the putative cytochrome P450 monooxygenases sdnB, sdnE, sdnF and sdnH to give a hydroxylated cycloaraneosene derivative such as cycloaraneosene-8,9,13,19-tetraol (PubMed:27072286). Although the order of the hydroxylations is unclear, at least C8, C9 and C13 of the cycloaraneosene skeleton are hydroxylated before the sordaricin formation (PubMed:27072286). Dehydration of the 13-hydroxy group of the hydroxylated cycloaraneosene derivative might be catalyzed by an unassigned hypothetical protein such as sdnG and sdnP to construct the cyclopentadiene moiety (PubMed:27072286). The FAD-dependent oxidoreductase sdnN is proposed to catalyze the oxidation at C9 of the hydroxylated cycloaraneosene derivative and also catalyze the Baeyer-Villiger oxidation to give the lactone intermediate (PubMed:27072286). The presumed lactone intermediate would be hydrolyzed to give an acrolein moiety and a carboxylate moiety (PubMed:27072286). Then, [4+2]cycloaddition would occur between the acrolein moiety and the cyclopentadiene moiety to give sordaricin (PubMed:27072286). SdnN might also be involved in the [4+2]cycloaddition after the hypothesized oxidation to accommodate the oxidized product and prompt the [4+2]cycloaddition (PubMed:27072286). GDP-6-deoxy-D-altrose may be biosynthesized from GDP-D-mannose by the putative GDP-mannose-4,6-dehydratase sdnI and the short-chain dehydrogenase sdnK (PubMed:27072286). The glycosyltransferase sdnJ catalyzes the attachment of 6-deoxy-D-altrose onto the 19-hydroxy group of sordaricin to give 4'-O-demethylsordarin (PubMed:27072286). The methyltransferase sdnD would complete the biosynthesis of sordarin (PubMed:27072286). Sordarin can be further modified into hypoxysordarin (PubMed:27072286). The unique acyl chain at the 3'-hydroxy group of hypoxysordarin would be constructed by an iterative type I PKS sdnO and the trans-acting polyketide methyltransferase sdnL. SdnL would be responsible for the introduction of an alpha-methyl group of the polyketide chain (PubMed:27072286). Alternatively, the beta-lactamase-like protein sdnR might be responsible for the cleavage and transfer of the polyketide chain from the PKS sdnO to sordarin (PubMed:27072286). Two putative cytochrome P450 monooxygenases, sdnQ and sdnT, might catalyze the epoxidations of the polyketide chain to complete the biosynthesis of hypoxysordarin (PubMed:27072286). Transcriptional regulators sdnM and sdnS are presumably encoded for the transcriptional regulation of the expression of the sdn gene cluster (PubMed:27072286).</text>
</comment>
<comment type="cofactor">
    <cofactor evidence="1">
        <name>heme</name>
        <dbReference type="ChEBI" id="CHEBI:30413"/>
    </cofactor>
</comment>
<comment type="pathway">
    <text evidence="8">Antibiotic biosynthesis.</text>
</comment>
<comment type="subcellular location">
    <subcellularLocation>
        <location evidence="2">Membrane</location>
        <topology evidence="2">Multi-pass membrane protein</topology>
    </subcellularLocation>
</comment>
<comment type="similarity">
    <text evidence="7">Belongs to the cytochrome P450 family.</text>
</comment>
<protein>
    <recommendedName>
        <fullName evidence="6">Cytochrome P450 monooxygenase sdnH</fullName>
        <ecNumber evidence="8">1.-.-.-</ecNumber>
    </recommendedName>
    <alternativeName>
        <fullName evidence="6">Sordarin/hypoxysordarin biosynthesis cluster protein H</fullName>
    </alternativeName>
</protein>
<proteinExistence type="inferred from homology"/>
<accession>A0A1B4XBH8</accession>